<feature type="chain" id="PRO_0000451455" description="Homeobox protein mls-2">
    <location>
        <begin position="1"/>
        <end position="341"/>
    </location>
</feature>
<feature type="DNA-binding region" description="Homeobox" evidence="1">
    <location>
        <begin position="201"/>
        <end position="260"/>
    </location>
</feature>
<feature type="region of interest" description="Disordered" evidence="3">
    <location>
        <begin position="1"/>
        <end position="78"/>
    </location>
</feature>
<feature type="region of interest" description="Disordered" evidence="3">
    <location>
        <begin position="139"/>
        <end position="209"/>
    </location>
</feature>
<feature type="compositionally biased region" description="Polar residues" evidence="3">
    <location>
        <begin position="64"/>
        <end position="78"/>
    </location>
</feature>
<feature type="compositionally biased region" description="Basic and acidic residues" evidence="3">
    <location>
        <begin position="153"/>
        <end position="166"/>
    </location>
</feature>
<feature type="mutagenesis site" description="In cc615; approximately 30% larval and adult lethality. Abnormal cell cleavage orientation, under-proliferation and cell fate transformation in the mesodermal (M) lineage. Abolishes M-lineage specific expression of hlh-1. At late L1 stage, animals contain a reduced number of M lineage descendants. Defects in expression of ceh-36 and odr-1 in AWC neurons. Abnormal excretory duct and pore development in early L1 larvae." evidence="4 7 8">
    <location>
        <begin position="26"/>
        <end position="341"/>
    </location>
</feature>
<feature type="mutagenesis site" description="In oy88; multiple morphological defects of AWC sensory neurons, including truncated dendrites, abnormal axonal branching and axonal trajectories and altered cell body positions. Altered expression of ceh-36 homeobox gene and odr-1 receptor-type guanylate cyclase in AWC neurons and altered expression of differention markers in ASH, ASK and AIM neurons." evidence="7">
    <original>S</original>
    <variation>N</variation>
    <location>
        <position position="209"/>
    </location>
</feature>
<feature type="mutagenesis site" description="In cs71; abnormal excretory duct and pore development in early L1 larvae, leading to abnormal duct and pore shape." evidence="8 9">
    <location>
        <begin position="250"/>
        <end position="341"/>
    </location>
</feature>
<comment type="function">
    <text evidence="4 6 7 8">Transcription factor that binds to the promoter of target genes (PubMed:20150279). Regulates fate specification and/or differentiation of multiple cell types arising from the embryonic mesodermal (M) lineage and the ABp(l/r)paa precursors (PubMed:16107479, PubMed:20150279). In the postembryonic M lineage, regulates cleavage orientation, cell proliferation and cell fate specification (PubMed:16107479). Regulates hlh-1 expression to specify coelomocyte fate in the mesodermal (M) lineage (PubMed:16107479). In AWC neurons, initiates expression of ceh-36, leading to the expression of terminal differentiation genes (PubMed:20150279). Regulates ventral cephalic sheath (CEPsh) glia differentiation and expression of transcription factor hlh-17 in CEPsh glia (PubMed:18508862). Promotes terminal differentiation and morphogenesis of the epithelial duct and pore cells (PubMed:22537498). In the duct cell, cooperates with the EGF-Ras-ERK pathway in turning on the terminal differentiation gene lin-48 (PubMed:22537498).</text>
</comment>
<comment type="subcellular location">
    <subcellularLocation>
        <location evidence="1 2 4 6">Nucleus</location>
    </subcellularLocation>
</comment>
<comment type="tissue specificity">
    <text evidence="4 5">Expressed in a subset of head neurons, including AIM and ASK (at protein level).</text>
</comment>
<comment type="developmental stage">
    <text evidence="4 5 6 7 8 9">First expressed around the 50-cell stage of embryogenesis in proliferating cells that are primarily located at the anterior of the embryo in the early M lineage (at protein level) (PubMed:16107479, PubMed:18316179, PubMed:22537498). During morphogenesis, expression becomes restricted to a small subset of head neuronal precursors, including AIM and ASK (at protein level) (PubMed:16107479, PubMed:18316179). Expressed in precursor cells of the left and right ventral CEPsh glia, ABplpaaapap and ABprpaaapap, respectively and also in precursors of dorsal CEPsh glia (PubMed:18508862). Expressed in the duct and pore lineages, persisting through the stages of ventral enclosure and 1.5-folds of embryonic development, but not detectable by the L1 larval stage, when duct and pore cells achieve mature morphology (PubMed:22537498, PubMed:25738873). Expressed in ABpxp descendants that give rise to the excretory system (PubMed:25738873). Transiently expressed in AWC neurons in L1 larvae until abolished shortly after hatching (PubMed:20150279). During the L2 and L3 larval stages, expressed in a group of proliferating cells surrounding the gonad (PubMed:18316179).</text>
</comment>
<comment type="similarity">
    <text evidence="11">Belongs to the HMX homeobox family.</text>
</comment>
<name>HMX_CAEEL</name>
<sequence>MPTSVMNLPIDMTTMSSQERLEKMSQLPKIELMEEEEEEEMKPSSDNKIKFNISELLEDDRKPTTQSSPSASSEDSTNEIEQTAFNFNFDPKMNPISALLQLQQTFLNVGNQQNMISPLTMFPFFGLPTAQLMHFKNMSNPDVNIQSDNGEEKDEKSEGKDGETRDSTGGSPLESDAEDDDDIGRGSDDEANSSDPSQNRKKKTRTVFSRSQVSQLEMMFECKRYLSSQERSNLAQKLHLTETQVKIWFQNRRNKFKRQAQTDDTNISLQMHRANVFSIPATTALTSPILTIPTTSAGVNMRNMISSPMDASATAAARFLFGFGTLQAQQNLNASAQAQNM</sequence>
<protein>
    <recommendedName>
        <fullName evidence="10">Homeobox protein mls-2</fullName>
    </recommendedName>
    <alternativeName>
        <fullName evidence="10 13">Mesodermal lineage specification protein 2</fullName>
    </alternativeName>
</protein>
<keyword id="KW-0238">DNA-binding</keyword>
<keyword id="KW-0371">Homeobox</keyword>
<keyword id="KW-0539">Nucleus</keyword>
<keyword id="KW-1185">Reference proteome</keyword>
<keyword id="KW-0804">Transcription</keyword>
<keyword id="KW-0805">Transcription regulation</keyword>
<dbReference type="EMBL" id="BX284606">
    <property type="protein sequence ID" value="CCD67080.1"/>
    <property type="molecule type" value="Genomic_DNA"/>
</dbReference>
<dbReference type="RefSeq" id="NP_508815.2">
    <property type="nucleotide sequence ID" value="NM_076414.5"/>
</dbReference>
<dbReference type="SMR" id="Q18533"/>
<dbReference type="FunCoup" id="Q18533">
    <property type="interactions" value="96"/>
</dbReference>
<dbReference type="IntAct" id="Q18533">
    <property type="interactions" value="20"/>
</dbReference>
<dbReference type="STRING" id="6239.C39E6.4.1"/>
<dbReference type="PaxDb" id="6239-C39E6.4"/>
<dbReference type="EnsemblMetazoa" id="C39E6.4.1">
    <property type="protein sequence ID" value="C39E6.4.1"/>
    <property type="gene ID" value="WBGene00003377"/>
</dbReference>
<dbReference type="GeneID" id="180751"/>
<dbReference type="KEGG" id="cel:CELE_C39E6.4"/>
<dbReference type="UCSC" id="C39E6.4">
    <property type="organism name" value="c. elegans"/>
</dbReference>
<dbReference type="AGR" id="WB:WBGene00003377"/>
<dbReference type="CTD" id="180751"/>
<dbReference type="WormBase" id="C39E6.4">
    <property type="protein sequence ID" value="CE30891"/>
    <property type="gene ID" value="WBGene00003377"/>
    <property type="gene designation" value="mls-2"/>
</dbReference>
<dbReference type="eggNOG" id="KOG0485">
    <property type="taxonomic scope" value="Eukaryota"/>
</dbReference>
<dbReference type="GeneTree" id="ENSGT00940000162580"/>
<dbReference type="HOGENOM" id="CLU_837412_0_0_1"/>
<dbReference type="InParanoid" id="Q18533"/>
<dbReference type="OMA" id="MNLPIDM"/>
<dbReference type="OrthoDB" id="6159439at2759"/>
<dbReference type="SignaLink" id="Q18533"/>
<dbReference type="PRO" id="PR:Q18533"/>
<dbReference type="Proteomes" id="UP000001940">
    <property type="component" value="Chromosome X"/>
</dbReference>
<dbReference type="Bgee" id="WBGene00003377">
    <property type="expression patterns" value="Expressed in embryo and 3 other cell types or tissues"/>
</dbReference>
<dbReference type="GO" id="GO:0005634">
    <property type="term" value="C:nucleus"/>
    <property type="evidence" value="ECO:0000314"/>
    <property type="project" value="WormBase"/>
</dbReference>
<dbReference type="GO" id="GO:0000981">
    <property type="term" value="F:DNA-binding transcription factor activity, RNA polymerase II-specific"/>
    <property type="evidence" value="ECO:0000318"/>
    <property type="project" value="GO_Central"/>
</dbReference>
<dbReference type="GO" id="GO:0000977">
    <property type="term" value="F:RNA polymerase II transcription regulatory region sequence-specific DNA binding"/>
    <property type="evidence" value="ECO:0000314"/>
    <property type="project" value="WormBase"/>
</dbReference>
<dbReference type="GO" id="GO:0000132">
    <property type="term" value="P:establishment of mitotic spindle orientation"/>
    <property type="evidence" value="ECO:0000315"/>
    <property type="project" value="WormBase"/>
</dbReference>
<dbReference type="GO" id="GO:0002119">
    <property type="term" value="P:nematode larval development"/>
    <property type="evidence" value="ECO:0000315"/>
    <property type="project" value="WormBase"/>
</dbReference>
<dbReference type="GO" id="GO:0003387">
    <property type="term" value="P:neuron differentiation involved in amphid sensory organ development"/>
    <property type="evidence" value="ECO:0000315"/>
    <property type="project" value="WormBase"/>
</dbReference>
<dbReference type="GO" id="GO:0008284">
    <property type="term" value="P:positive regulation of cell population proliferation"/>
    <property type="evidence" value="ECO:0000315"/>
    <property type="project" value="WormBase"/>
</dbReference>
<dbReference type="GO" id="GO:0045687">
    <property type="term" value="P:positive regulation of glial cell differentiation"/>
    <property type="evidence" value="ECO:0000315"/>
    <property type="project" value="UniProtKB"/>
</dbReference>
<dbReference type="GO" id="GO:0045944">
    <property type="term" value="P:positive regulation of transcription by RNA polymerase II"/>
    <property type="evidence" value="ECO:0000315"/>
    <property type="project" value="WormBase"/>
</dbReference>
<dbReference type="GO" id="GO:0042661">
    <property type="term" value="P:regulation of mesodermal cell fate specification"/>
    <property type="evidence" value="ECO:0000315"/>
    <property type="project" value="WormBase"/>
</dbReference>
<dbReference type="GO" id="GO:0006357">
    <property type="term" value="P:regulation of transcription by RNA polymerase II"/>
    <property type="evidence" value="ECO:0000318"/>
    <property type="project" value="GO_Central"/>
</dbReference>
<dbReference type="CDD" id="cd00086">
    <property type="entry name" value="homeodomain"/>
    <property type="match status" value="1"/>
</dbReference>
<dbReference type="Gene3D" id="1.10.10.60">
    <property type="entry name" value="Homeodomain-like"/>
    <property type="match status" value="1"/>
</dbReference>
<dbReference type="InterPro" id="IPR001356">
    <property type="entry name" value="HD"/>
</dbReference>
<dbReference type="InterPro" id="IPR020479">
    <property type="entry name" value="HD_metazoa"/>
</dbReference>
<dbReference type="InterPro" id="IPR051300">
    <property type="entry name" value="HMX_Homeobox_TF"/>
</dbReference>
<dbReference type="InterPro" id="IPR017970">
    <property type="entry name" value="Homeobox_CS"/>
</dbReference>
<dbReference type="InterPro" id="IPR009057">
    <property type="entry name" value="Homeodomain-like_sf"/>
</dbReference>
<dbReference type="PANTHER" id="PTHR46110">
    <property type="entry name" value="HOMEOBOX PROTEIN HMX"/>
    <property type="match status" value="1"/>
</dbReference>
<dbReference type="PANTHER" id="PTHR46110:SF3">
    <property type="entry name" value="HOMEOBOX PROTEIN HMX"/>
    <property type="match status" value="1"/>
</dbReference>
<dbReference type="Pfam" id="PF00046">
    <property type="entry name" value="Homeodomain"/>
    <property type="match status" value="1"/>
</dbReference>
<dbReference type="PRINTS" id="PR00024">
    <property type="entry name" value="HOMEOBOX"/>
</dbReference>
<dbReference type="SMART" id="SM00389">
    <property type="entry name" value="HOX"/>
    <property type="match status" value="1"/>
</dbReference>
<dbReference type="SUPFAM" id="SSF46689">
    <property type="entry name" value="Homeodomain-like"/>
    <property type="match status" value="1"/>
</dbReference>
<dbReference type="PROSITE" id="PS00027">
    <property type="entry name" value="HOMEOBOX_1"/>
    <property type="match status" value="1"/>
</dbReference>
<dbReference type="PROSITE" id="PS50071">
    <property type="entry name" value="HOMEOBOX_2"/>
    <property type="match status" value="1"/>
</dbReference>
<reference evidence="12" key="1">
    <citation type="journal article" date="1998" name="Science">
        <title>Genome sequence of the nematode C. elegans: a platform for investigating biology.</title>
        <authorList>
            <consortium name="The C. elegans sequencing consortium"/>
        </authorList>
    </citation>
    <scope>NUCLEOTIDE SEQUENCE [LARGE SCALE GENOMIC DNA]</scope>
    <source>
        <strain evidence="12">Bristol N2</strain>
    </source>
</reference>
<reference evidence="11" key="2">
    <citation type="journal article" date="2005" name="Development">
        <title>The HMX homeodomain protein MLS-2 regulates cleavage orientation, cell proliferation and cell fate specification in the C. elegans postembryonic mesoderm.</title>
        <authorList>
            <person name="Jiang Y."/>
            <person name="Horner V."/>
            <person name="Liu J."/>
        </authorList>
    </citation>
    <scope>FUNCTION</scope>
    <scope>SUBCELLULAR LOCATION</scope>
    <scope>TISSUE SPECIFICITY</scope>
    <scope>DEVELOPMENTAL STAGE</scope>
    <scope>MUTAGENESIS OF 26-GLN--MET-341</scope>
</reference>
<reference evidence="11" key="3">
    <citation type="journal article" date="2008" name="Development">
        <title>mls-2 and vab-3 Control glia development, hlh-17/Olig expression and glia-dependent neurite extension in C. elegans.</title>
        <authorList>
            <person name="Yoshimura S."/>
            <person name="Murray J.I."/>
            <person name="Lu Y."/>
            <person name="Waterston R.H."/>
            <person name="Shaham S."/>
        </authorList>
    </citation>
    <scope>FUNCTION</scope>
    <scope>SUBCELLULAR LOCATION</scope>
    <scope>DEVELOPMENTAL STAGE</scope>
</reference>
<reference evidence="11" key="4">
    <citation type="journal article" date="2008" name="Mech. Dev.">
        <title>Mesodermal expression of the C. elegans HMX homolog mls-2 requires the PBC homolog CEH-20.</title>
        <authorList>
            <person name="Jiang Y."/>
            <person name="Shi H."/>
            <person name="Amin N.M."/>
            <person name="Sultan I."/>
            <person name="Liu J."/>
        </authorList>
    </citation>
    <scope>TISSUE SPECIFICITY</scope>
    <scope>DEVELOPMENTAL STAGE</scope>
</reference>
<reference evidence="11" key="5">
    <citation type="journal article" date="2010" name="Development">
        <title>The HMX/NKX homeodomain protein MLS-2 specifies the identity of the AWC sensory neuron type via regulation of the ceh-36 Otx gene in C. elegans.</title>
        <authorList>
            <person name="Kim K."/>
            <person name="Kim R."/>
            <person name="Sengupta P."/>
        </authorList>
    </citation>
    <scope>FUNCTION</scope>
    <scope>DEVELOPMENTAL STAGE</scope>
    <scope>MUTAGENESIS OF 26-GLN--MET-341</scope>
    <scope>MUTAGENESIS OF SER-209</scope>
</reference>
<reference evidence="11" key="6">
    <citation type="journal article" date="2012" name="Dev. Biol.">
        <title>The Nkx5/HMX homeodomain protein MLS-2 is required for proper tube cell shape in the C. elegans excretory system.</title>
        <authorList>
            <person name="Abdus-Saboor I."/>
            <person name="Stone C.E."/>
            <person name="Murray J.I."/>
            <person name="Sundaram M.V."/>
        </authorList>
    </citation>
    <scope>FUNCTION</scope>
    <scope>DEVELOPMENTAL STAGE</scope>
    <scope>MUTAGENESIS OF 26-GLN--MET-341</scope>
    <scope>MUTAGENESIS OF 250-GLN--MET-341</scope>
</reference>
<reference evidence="11" key="7">
    <citation type="journal article" date="2015" name="PLoS Genet.">
        <title>The Bicoid class homeodomain factors ceh-36/OTX and unc-30/PITX cooperate in C. elegans embryonic progenitor cells to regulate robust development.</title>
        <authorList>
            <person name="Walton T."/>
            <person name="Preston E."/>
            <person name="Nair G."/>
            <person name="Zacharias A.L."/>
            <person name="Raj A."/>
            <person name="Murray J.I."/>
        </authorList>
    </citation>
    <scope>DEVELOPMENTAL STAGE</scope>
    <scope>MUTAGENESIS OF 250-GLN--MET-341</scope>
</reference>
<proteinExistence type="evidence at protein level"/>
<gene>
    <name evidence="10 13" type="primary">mls-2</name>
    <name evidence="13" type="ORF">C39E6.4</name>
</gene>
<accession>Q18533</accession>
<evidence type="ECO:0000255" key="1">
    <source>
        <dbReference type="PROSITE-ProRule" id="PRU00108"/>
    </source>
</evidence>
<evidence type="ECO:0000255" key="2">
    <source>
        <dbReference type="RuleBase" id="RU000682"/>
    </source>
</evidence>
<evidence type="ECO:0000256" key="3">
    <source>
        <dbReference type="SAM" id="MobiDB-lite"/>
    </source>
</evidence>
<evidence type="ECO:0000269" key="4">
    <source>
    </source>
</evidence>
<evidence type="ECO:0000269" key="5">
    <source>
    </source>
</evidence>
<evidence type="ECO:0000269" key="6">
    <source>
    </source>
</evidence>
<evidence type="ECO:0000269" key="7">
    <source>
    </source>
</evidence>
<evidence type="ECO:0000269" key="8">
    <source>
    </source>
</evidence>
<evidence type="ECO:0000269" key="9">
    <source>
    </source>
</evidence>
<evidence type="ECO:0000303" key="10">
    <source>
    </source>
</evidence>
<evidence type="ECO:0000305" key="11"/>
<evidence type="ECO:0000312" key="12">
    <source>
        <dbReference type="Proteomes" id="UP000001940"/>
    </source>
</evidence>
<evidence type="ECO:0000312" key="13">
    <source>
        <dbReference type="WormBase" id="C39E6.4"/>
    </source>
</evidence>
<organism evidence="12">
    <name type="scientific">Caenorhabditis elegans</name>
    <dbReference type="NCBI Taxonomy" id="6239"/>
    <lineage>
        <taxon>Eukaryota</taxon>
        <taxon>Metazoa</taxon>
        <taxon>Ecdysozoa</taxon>
        <taxon>Nematoda</taxon>
        <taxon>Chromadorea</taxon>
        <taxon>Rhabditida</taxon>
        <taxon>Rhabditina</taxon>
        <taxon>Rhabditomorpha</taxon>
        <taxon>Rhabditoidea</taxon>
        <taxon>Rhabditidae</taxon>
        <taxon>Peloderinae</taxon>
        <taxon>Caenorhabditis</taxon>
    </lineage>
</organism>